<feature type="chain" id="PRO_0000247435" description="Protein TEX261">
    <location>
        <begin position="1"/>
        <end position="196"/>
    </location>
</feature>
<feature type="transmembrane region" description="Helical" evidence="1">
    <location>
        <begin position="3"/>
        <end position="23"/>
    </location>
</feature>
<feature type="transmembrane region" description="Helical" evidence="1">
    <location>
        <begin position="42"/>
        <end position="62"/>
    </location>
</feature>
<feature type="transmembrane region" description="Helical" evidence="1">
    <location>
        <begin position="70"/>
        <end position="90"/>
    </location>
</feature>
<feature type="transmembrane region" description="Helical" evidence="1">
    <location>
        <begin position="97"/>
        <end position="117"/>
    </location>
</feature>
<feature type="transmembrane region" description="Helical" evidence="1">
    <location>
        <begin position="125"/>
        <end position="145"/>
    </location>
</feature>
<protein>
    <recommendedName>
        <fullName>Protein TEX261</fullName>
    </recommendedName>
</protein>
<organism>
    <name type="scientific">Pongo abelii</name>
    <name type="common">Sumatran orangutan</name>
    <name type="synonym">Pongo pygmaeus abelii</name>
    <dbReference type="NCBI Taxonomy" id="9601"/>
    <lineage>
        <taxon>Eukaryota</taxon>
        <taxon>Metazoa</taxon>
        <taxon>Chordata</taxon>
        <taxon>Craniata</taxon>
        <taxon>Vertebrata</taxon>
        <taxon>Euteleostomi</taxon>
        <taxon>Mammalia</taxon>
        <taxon>Eutheria</taxon>
        <taxon>Euarchontoglires</taxon>
        <taxon>Primates</taxon>
        <taxon>Haplorrhini</taxon>
        <taxon>Catarrhini</taxon>
        <taxon>Hominidae</taxon>
        <taxon>Pongo</taxon>
    </lineage>
</organism>
<sequence length="196" mass="22494">MWFMYLLSWLSLFIQVAFITLAVAAGLYYLAELIEEYTVATSRIIKYMIWFSTAVLIGLYVFERFPTSMIGVGLFTNLVYFGLLQTFPFIMLTSPNFILSCGLVVVNHYLACQFFAEEYYPFSEVLAYFTFCLWIIPFAFFVSLSAGENVLPSTMQPGDDVVSNYFTKGKRGKRLGILVVFSFIKEAILPSRQKIY</sequence>
<proteinExistence type="evidence at transcript level"/>
<keyword id="KW-0472">Membrane</keyword>
<keyword id="KW-1185">Reference proteome</keyword>
<keyword id="KW-0812">Transmembrane</keyword>
<keyword id="KW-1133">Transmembrane helix</keyword>
<comment type="subcellular location">
    <subcellularLocation>
        <location evidence="2">Membrane</location>
        <topology evidence="2">Multi-pass membrane protein</topology>
    </subcellularLocation>
</comment>
<comment type="similarity">
    <text evidence="2">Belongs to the SVP26 family.</text>
</comment>
<name>TX261_PONAB</name>
<accession>Q5RFE0</accession>
<evidence type="ECO:0000255" key="1"/>
<evidence type="ECO:0000305" key="2"/>
<gene>
    <name type="primary">TEX261</name>
</gene>
<dbReference type="EMBL" id="CR857218">
    <property type="protein sequence ID" value="CAH89517.1"/>
    <property type="molecule type" value="mRNA"/>
</dbReference>
<dbReference type="RefSeq" id="NP_001124657.1">
    <property type="nucleotide sequence ID" value="NM_001131185.2"/>
</dbReference>
<dbReference type="GeneID" id="100171500"/>
<dbReference type="KEGG" id="pon:100171500"/>
<dbReference type="CTD" id="113419"/>
<dbReference type="eggNOG" id="KOG4136">
    <property type="taxonomic scope" value="Eukaryota"/>
</dbReference>
<dbReference type="InParanoid" id="Q5RFE0"/>
<dbReference type="OrthoDB" id="28257at2759"/>
<dbReference type="Proteomes" id="UP000001595">
    <property type="component" value="Unplaced"/>
</dbReference>
<dbReference type="GO" id="GO:0030134">
    <property type="term" value="C:COPII-coated ER to Golgi transport vesicle"/>
    <property type="evidence" value="ECO:0007669"/>
    <property type="project" value="TreeGrafter"/>
</dbReference>
<dbReference type="GO" id="GO:0005789">
    <property type="term" value="C:endoplasmic reticulum membrane"/>
    <property type="evidence" value="ECO:0007669"/>
    <property type="project" value="TreeGrafter"/>
</dbReference>
<dbReference type="GO" id="GO:0000139">
    <property type="term" value="C:Golgi membrane"/>
    <property type="evidence" value="ECO:0007669"/>
    <property type="project" value="TreeGrafter"/>
</dbReference>
<dbReference type="GO" id="GO:0097020">
    <property type="term" value="F:COPII receptor activity"/>
    <property type="evidence" value="ECO:0007669"/>
    <property type="project" value="InterPro"/>
</dbReference>
<dbReference type="GO" id="GO:0006888">
    <property type="term" value="P:endoplasmic reticulum to Golgi vesicle-mediated transport"/>
    <property type="evidence" value="ECO:0007669"/>
    <property type="project" value="InterPro"/>
</dbReference>
<dbReference type="InterPro" id="IPR007277">
    <property type="entry name" value="Svp26/Tex261"/>
</dbReference>
<dbReference type="PANTHER" id="PTHR13144:SF0">
    <property type="entry name" value="PROTEIN TEX261"/>
    <property type="match status" value="1"/>
</dbReference>
<dbReference type="PANTHER" id="PTHR13144">
    <property type="entry name" value="TEX261 PROTEIN"/>
    <property type="match status" value="1"/>
</dbReference>
<dbReference type="Pfam" id="PF04148">
    <property type="entry name" value="Erv26"/>
    <property type="match status" value="1"/>
</dbReference>
<reference key="1">
    <citation type="submission" date="2004-11" db="EMBL/GenBank/DDBJ databases">
        <authorList>
            <consortium name="The German cDNA consortium"/>
        </authorList>
    </citation>
    <scope>NUCLEOTIDE SEQUENCE [LARGE SCALE MRNA]</scope>
    <source>
        <tissue>Kidney</tissue>
    </source>
</reference>